<name>FLGA_BUCAI</name>
<proteinExistence type="inferred from homology"/>
<evidence type="ECO:0000250" key="1"/>
<evidence type="ECO:0000255" key="2"/>
<evidence type="ECO:0000305" key="3"/>
<keyword id="KW-1005">Bacterial flagellum biogenesis</keyword>
<keyword id="KW-0574">Periplasm</keyword>
<keyword id="KW-1185">Reference proteome</keyword>
<keyword id="KW-0732">Signal</keyword>
<protein>
    <recommendedName>
        <fullName>Flagella basal body P-ring formation protein FlgA</fullName>
    </recommendedName>
</protein>
<reference key="1">
    <citation type="journal article" date="2000" name="Nature">
        <title>Genome sequence of the endocellular bacterial symbiont of aphids Buchnera sp. APS.</title>
        <authorList>
            <person name="Shigenobu S."/>
            <person name="Watanabe H."/>
            <person name="Hattori M."/>
            <person name="Sakaki Y."/>
            <person name="Ishikawa H."/>
        </authorList>
    </citation>
    <scope>NUCLEOTIDE SEQUENCE [LARGE SCALE GENOMIC DNA]</scope>
    <source>
        <strain>APS</strain>
    </source>
</reference>
<gene>
    <name type="primary">flgA</name>
    <name type="ordered locus">BU336</name>
</gene>
<organism>
    <name type="scientific">Buchnera aphidicola subsp. Acyrthosiphon pisum (strain APS)</name>
    <name type="common">Acyrthosiphon pisum symbiotic bacterium</name>
    <dbReference type="NCBI Taxonomy" id="107806"/>
    <lineage>
        <taxon>Bacteria</taxon>
        <taxon>Pseudomonadati</taxon>
        <taxon>Pseudomonadota</taxon>
        <taxon>Gammaproteobacteria</taxon>
        <taxon>Enterobacterales</taxon>
        <taxon>Erwiniaceae</taxon>
        <taxon>Buchnera</taxon>
    </lineage>
</organism>
<accession>P57418</accession>
<sequence>MKITIYFFLLLLSFTINSVSATVQKFNFFDLNKQLNIFLKKEYPLNEDSIKIIIHTPLKKNIYCRKPDFSILSNTHNLGLINILLTCSKQHYYLTVEVQSEGEYIVANRKIPRGTRIKESDLKILIGRLDVLPNNTYRKKKDVVNRISLREFFPLQPITSFMTRPFWLVKVNQQVTVIINGNNFKMSSKAKSLSNGAQNQNIRVKTNSGKIINGIINENGEVIVSP</sequence>
<dbReference type="EMBL" id="BA000003">
    <property type="protein sequence ID" value="BAB13041.1"/>
    <property type="molecule type" value="Genomic_DNA"/>
</dbReference>
<dbReference type="RefSeq" id="NP_240155.1">
    <property type="nucleotide sequence ID" value="NC_002528.1"/>
</dbReference>
<dbReference type="RefSeq" id="WP_010896075.1">
    <property type="nucleotide sequence ID" value="NC_002528.1"/>
</dbReference>
<dbReference type="SMR" id="P57418"/>
<dbReference type="STRING" id="563178.BUAP5A_330"/>
<dbReference type="EnsemblBacteria" id="BAB13041">
    <property type="protein sequence ID" value="BAB13041"/>
    <property type="gene ID" value="BAB13041"/>
</dbReference>
<dbReference type="KEGG" id="buc:BU336"/>
<dbReference type="PATRIC" id="fig|107806.10.peg.347"/>
<dbReference type="eggNOG" id="COG1261">
    <property type="taxonomic scope" value="Bacteria"/>
</dbReference>
<dbReference type="HOGENOM" id="CLU_070510_2_0_6"/>
<dbReference type="Proteomes" id="UP000001806">
    <property type="component" value="Chromosome"/>
</dbReference>
<dbReference type="GO" id="GO:0042597">
    <property type="term" value="C:periplasmic space"/>
    <property type="evidence" value="ECO:0007669"/>
    <property type="project" value="UniProtKB-SubCell"/>
</dbReference>
<dbReference type="GO" id="GO:0044780">
    <property type="term" value="P:bacterial-type flagellum assembly"/>
    <property type="evidence" value="ECO:0007669"/>
    <property type="project" value="InterPro"/>
</dbReference>
<dbReference type="CDD" id="cd11614">
    <property type="entry name" value="SAF_CpaB_FlgA_like"/>
    <property type="match status" value="1"/>
</dbReference>
<dbReference type="Gene3D" id="2.30.30.760">
    <property type="match status" value="1"/>
</dbReference>
<dbReference type="Gene3D" id="3.90.1210.10">
    <property type="entry name" value="Antifreeze-like/N-acetylneuraminic acid synthase C-terminal domain"/>
    <property type="match status" value="1"/>
</dbReference>
<dbReference type="InterPro" id="IPR017585">
    <property type="entry name" value="Flag_basal_body_FlgA_C"/>
</dbReference>
<dbReference type="InterPro" id="IPR039246">
    <property type="entry name" value="Flagellar_FlgA"/>
</dbReference>
<dbReference type="InterPro" id="IPR013974">
    <property type="entry name" value="SAF"/>
</dbReference>
<dbReference type="NCBIfam" id="TIGR03170">
    <property type="entry name" value="flgA_cterm"/>
    <property type="match status" value="1"/>
</dbReference>
<dbReference type="PANTHER" id="PTHR36307">
    <property type="entry name" value="FLAGELLA BASAL BODY P-RING FORMATION PROTEIN FLGA"/>
    <property type="match status" value="1"/>
</dbReference>
<dbReference type="PANTHER" id="PTHR36307:SF1">
    <property type="entry name" value="FLAGELLA BASAL BODY P-RING FORMATION PROTEIN FLGA"/>
    <property type="match status" value="1"/>
</dbReference>
<dbReference type="Pfam" id="PF13144">
    <property type="entry name" value="ChapFlgA"/>
    <property type="match status" value="1"/>
</dbReference>
<dbReference type="SMART" id="SM00858">
    <property type="entry name" value="SAF"/>
    <property type="match status" value="1"/>
</dbReference>
<feature type="signal peptide" evidence="2">
    <location>
        <begin position="1"/>
        <end position="21"/>
    </location>
</feature>
<feature type="chain" id="PRO_0000009339" description="Flagella basal body P-ring formation protein FlgA">
    <location>
        <begin position="22"/>
        <end position="226"/>
    </location>
</feature>
<comment type="function">
    <text evidence="1">Involved in the assembly process of the P-ring formation. It may associate with FlgF on the rod constituting a structure essential for the P-ring assembly or may act as a modulator protein for the P-ring assembly (By similarity).</text>
</comment>
<comment type="subcellular location">
    <subcellularLocation>
        <location evidence="3">Periplasm</location>
    </subcellularLocation>
</comment>
<comment type="similarity">
    <text evidence="3">Belongs to the FlgA family.</text>
</comment>